<sequence>MGIKNLNSVTASLRGTVLLDKSMLWKGKPEKSLVSYKISRGGRNSRGVITVRHRGRGHKRLYRVVDFKRNKVGVSATVERLEYDPNRTAFIALLSYDDGEKSYIIAPNGLKKGDVVISGDGADILPGNCLLLKSIPVGTFVHNVELRPGNGGVIARSAGTYAQLMSKDGMYVLLRLSSGEIRKVLSDCRATIGIVSNLDNQNVKLGKAGRSRWLGIRPTVRGVAMNPIDHPHGGGEGKTSGGRNPVTPWGVPTKGKKTRKRNKSSNKYIKRVSDKG</sequence>
<feature type="chain" id="PRO_0000237183" description="Large ribosomal subunit protein uL2">
    <location>
        <begin position="1"/>
        <end position="276"/>
    </location>
</feature>
<feature type="region of interest" description="Disordered" evidence="2">
    <location>
        <begin position="224"/>
        <end position="276"/>
    </location>
</feature>
<feature type="compositionally biased region" description="Basic residues" evidence="2">
    <location>
        <begin position="254"/>
        <end position="270"/>
    </location>
</feature>
<gene>
    <name evidence="1" type="primary">rplB</name>
    <name type="ordered locus">ECH_0412</name>
</gene>
<organism>
    <name type="scientific">Ehrlichia chaffeensis (strain ATCC CRL-10679 / Arkansas)</name>
    <dbReference type="NCBI Taxonomy" id="205920"/>
    <lineage>
        <taxon>Bacteria</taxon>
        <taxon>Pseudomonadati</taxon>
        <taxon>Pseudomonadota</taxon>
        <taxon>Alphaproteobacteria</taxon>
        <taxon>Rickettsiales</taxon>
        <taxon>Anaplasmataceae</taxon>
        <taxon>Ehrlichia</taxon>
    </lineage>
</organism>
<keyword id="KW-1185">Reference proteome</keyword>
<keyword id="KW-0687">Ribonucleoprotein</keyword>
<keyword id="KW-0689">Ribosomal protein</keyword>
<keyword id="KW-0694">RNA-binding</keyword>
<keyword id="KW-0699">rRNA-binding</keyword>
<reference key="1">
    <citation type="journal article" date="2006" name="PLoS Genet.">
        <title>Comparative genomics of emerging human ehrlichiosis agents.</title>
        <authorList>
            <person name="Dunning Hotopp J.C."/>
            <person name="Lin M."/>
            <person name="Madupu R."/>
            <person name="Crabtree J."/>
            <person name="Angiuoli S.V."/>
            <person name="Eisen J.A."/>
            <person name="Seshadri R."/>
            <person name="Ren Q."/>
            <person name="Wu M."/>
            <person name="Utterback T.R."/>
            <person name="Smith S."/>
            <person name="Lewis M."/>
            <person name="Khouri H."/>
            <person name="Zhang C."/>
            <person name="Niu H."/>
            <person name="Lin Q."/>
            <person name="Ohashi N."/>
            <person name="Zhi N."/>
            <person name="Nelson W.C."/>
            <person name="Brinkac L.M."/>
            <person name="Dodson R.J."/>
            <person name="Rosovitz M.J."/>
            <person name="Sundaram J.P."/>
            <person name="Daugherty S.C."/>
            <person name="Davidsen T."/>
            <person name="Durkin A.S."/>
            <person name="Gwinn M.L."/>
            <person name="Haft D.H."/>
            <person name="Selengut J.D."/>
            <person name="Sullivan S.A."/>
            <person name="Zafar N."/>
            <person name="Zhou L."/>
            <person name="Benahmed F."/>
            <person name="Forberger H."/>
            <person name="Halpin R."/>
            <person name="Mulligan S."/>
            <person name="Robinson J."/>
            <person name="White O."/>
            <person name="Rikihisa Y."/>
            <person name="Tettelin H."/>
        </authorList>
    </citation>
    <scope>NUCLEOTIDE SEQUENCE [LARGE SCALE GENOMIC DNA]</scope>
    <source>
        <strain>ATCC CRL-10679 / Arkansas</strain>
    </source>
</reference>
<dbReference type="EMBL" id="CP000236">
    <property type="protein sequence ID" value="ABD45428.1"/>
    <property type="molecule type" value="Genomic_DNA"/>
</dbReference>
<dbReference type="RefSeq" id="WP_011452579.1">
    <property type="nucleotide sequence ID" value="NC_007799.1"/>
</dbReference>
<dbReference type="SMR" id="Q2GH53"/>
<dbReference type="STRING" id="205920.ECH_0412"/>
<dbReference type="KEGG" id="ech:ECH_0412"/>
<dbReference type="eggNOG" id="COG0090">
    <property type="taxonomic scope" value="Bacteria"/>
</dbReference>
<dbReference type="HOGENOM" id="CLU_036235_2_1_5"/>
<dbReference type="OrthoDB" id="9778722at2"/>
<dbReference type="Proteomes" id="UP000008320">
    <property type="component" value="Chromosome"/>
</dbReference>
<dbReference type="GO" id="GO:0015934">
    <property type="term" value="C:large ribosomal subunit"/>
    <property type="evidence" value="ECO:0007669"/>
    <property type="project" value="InterPro"/>
</dbReference>
<dbReference type="GO" id="GO:0019843">
    <property type="term" value="F:rRNA binding"/>
    <property type="evidence" value="ECO:0007669"/>
    <property type="project" value="UniProtKB-UniRule"/>
</dbReference>
<dbReference type="GO" id="GO:0003735">
    <property type="term" value="F:structural constituent of ribosome"/>
    <property type="evidence" value="ECO:0007669"/>
    <property type="project" value="InterPro"/>
</dbReference>
<dbReference type="GO" id="GO:0016740">
    <property type="term" value="F:transferase activity"/>
    <property type="evidence" value="ECO:0007669"/>
    <property type="project" value="InterPro"/>
</dbReference>
<dbReference type="GO" id="GO:0002181">
    <property type="term" value="P:cytoplasmic translation"/>
    <property type="evidence" value="ECO:0007669"/>
    <property type="project" value="TreeGrafter"/>
</dbReference>
<dbReference type="FunFam" id="2.30.30.30:FF:000001">
    <property type="entry name" value="50S ribosomal protein L2"/>
    <property type="match status" value="1"/>
</dbReference>
<dbReference type="FunFam" id="2.40.50.140:FF:000003">
    <property type="entry name" value="50S ribosomal protein L2"/>
    <property type="match status" value="1"/>
</dbReference>
<dbReference type="FunFam" id="4.10.950.10:FF:000001">
    <property type="entry name" value="50S ribosomal protein L2"/>
    <property type="match status" value="1"/>
</dbReference>
<dbReference type="Gene3D" id="2.30.30.30">
    <property type="match status" value="1"/>
</dbReference>
<dbReference type="Gene3D" id="2.40.50.140">
    <property type="entry name" value="Nucleic acid-binding proteins"/>
    <property type="match status" value="1"/>
</dbReference>
<dbReference type="Gene3D" id="4.10.950.10">
    <property type="entry name" value="Ribosomal protein L2, domain 3"/>
    <property type="match status" value="1"/>
</dbReference>
<dbReference type="HAMAP" id="MF_01320_B">
    <property type="entry name" value="Ribosomal_uL2_B"/>
    <property type="match status" value="1"/>
</dbReference>
<dbReference type="InterPro" id="IPR012340">
    <property type="entry name" value="NA-bd_OB-fold"/>
</dbReference>
<dbReference type="InterPro" id="IPR014722">
    <property type="entry name" value="Rib_uL2_dom2"/>
</dbReference>
<dbReference type="InterPro" id="IPR002171">
    <property type="entry name" value="Ribosomal_uL2"/>
</dbReference>
<dbReference type="InterPro" id="IPR005880">
    <property type="entry name" value="Ribosomal_uL2_bac/org-type"/>
</dbReference>
<dbReference type="InterPro" id="IPR022669">
    <property type="entry name" value="Ribosomal_uL2_C"/>
</dbReference>
<dbReference type="InterPro" id="IPR022671">
    <property type="entry name" value="Ribosomal_uL2_CS"/>
</dbReference>
<dbReference type="InterPro" id="IPR014726">
    <property type="entry name" value="Ribosomal_uL2_dom3"/>
</dbReference>
<dbReference type="InterPro" id="IPR022666">
    <property type="entry name" value="Ribosomal_uL2_RNA-bd_dom"/>
</dbReference>
<dbReference type="InterPro" id="IPR008991">
    <property type="entry name" value="Translation_prot_SH3-like_sf"/>
</dbReference>
<dbReference type="NCBIfam" id="TIGR01171">
    <property type="entry name" value="rplB_bact"/>
    <property type="match status" value="1"/>
</dbReference>
<dbReference type="PANTHER" id="PTHR13691:SF5">
    <property type="entry name" value="LARGE RIBOSOMAL SUBUNIT PROTEIN UL2M"/>
    <property type="match status" value="1"/>
</dbReference>
<dbReference type="PANTHER" id="PTHR13691">
    <property type="entry name" value="RIBOSOMAL PROTEIN L2"/>
    <property type="match status" value="1"/>
</dbReference>
<dbReference type="Pfam" id="PF00181">
    <property type="entry name" value="Ribosomal_L2"/>
    <property type="match status" value="1"/>
</dbReference>
<dbReference type="Pfam" id="PF03947">
    <property type="entry name" value="Ribosomal_L2_C"/>
    <property type="match status" value="1"/>
</dbReference>
<dbReference type="PIRSF" id="PIRSF002158">
    <property type="entry name" value="Ribosomal_L2"/>
    <property type="match status" value="1"/>
</dbReference>
<dbReference type="SMART" id="SM01383">
    <property type="entry name" value="Ribosomal_L2"/>
    <property type="match status" value="1"/>
</dbReference>
<dbReference type="SMART" id="SM01382">
    <property type="entry name" value="Ribosomal_L2_C"/>
    <property type="match status" value="1"/>
</dbReference>
<dbReference type="SUPFAM" id="SSF50249">
    <property type="entry name" value="Nucleic acid-binding proteins"/>
    <property type="match status" value="1"/>
</dbReference>
<dbReference type="SUPFAM" id="SSF50104">
    <property type="entry name" value="Translation proteins SH3-like domain"/>
    <property type="match status" value="1"/>
</dbReference>
<dbReference type="PROSITE" id="PS00467">
    <property type="entry name" value="RIBOSOMAL_L2"/>
    <property type="match status" value="1"/>
</dbReference>
<evidence type="ECO:0000255" key="1">
    <source>
        <dbReference type="HAMAP-Rule" id="MF_01320"/>
    </source>
</evidence>
<evidence type="ECO:0000256" key="2">
    <source>
        <dbReference type="SAM" id="MobiDB-lite"/>
    </source>
</evidence>
<evidence type="ECO:0000305" key="3"/>
<comment type="function">
    <text evidence="1">One of the primary rRNA binding proteins. Required for association of the 30S and 50S subunits to form the 70S ribosome, for tRNA binding and peptide bond formation. It has been suggested to have peptidyltransferase activity; this is somewhat controversial. Makes several contacts with the 16S rRNA in the 70S ribosome.</text>
</comment>
<comment type="subunit">
    <text evidence="1">Part of the 50S ribosomal subunit. Forms a bridge to the 30S subunit in the 70S ribosome.</text>
</comment>
<comment type="similarity">
    <text evidence="1">Belongs to the universal ribosomal protein uL2 family.</text>
</comment>
<protein>
    <recommendedName>
        <fullName evidence="1">Large ribosomal subunit protein uL2</fullName>
    </recommendedName>
    <alternativeName>
        <fullName evidence="3">50S ribosomal protein L2</fullName>
    </alternativeName>
</protein>
<name>RL2_EHRCR</name>
<proteinExistence type="inferred from homology"/>
<accession>Q2GH53</accession>